<accession>Q2SSA0</accession>
<dbReference type="EC" id="6.1.1.20" evidence="1"/>
<dbReference type="EMBL" id="CP000123">
    <property type="protein sequence ID" value="ABC01188.1"/>
    <property type="molecule type" value="Genomic_DNA"/>
</dbReference>
<dbReference type="RefSeq" id="WP_011387264.1">
    <property type="nucleotide sequence ID" value="NC_007633.1"/>
</dbReference>
<dbReference type="SMR" id="Q2SSA0"/>
<dbReference type="GeneID" id="23778662"/>
<dbReference type="KEGG" id="mcp:MCAP_0383"/>
<dbReference type="HOGENOM" id="CLU_025086_0_1_14"/>
<dbReference type="PhylomeDB" id="Q2SSA0"/>
<dbReference type="Proteomes" id="UP000001928">
    <property type="component" value="Chromosome"/>
</dbReference>
<dbReference type="GO" id="GO:0005737">
    <property type="term" value="C:cytoplasm"/>
    <property type="evidence" value="ECO:0007669"/>
    <property type="project" value="UniProtKB-SubCell"/>
</dbReference>
<dbReference type="GO" id="GO:0005524">
    <property type="term" value="F:ATP binding"/>
    <property type="evidence" value="ECO:0007669"/>
    <property type="project" value="UniProtKB-UniRule"/>
</dbReference>
<dbReference type="GO" id="GO:0000287">
    <property type="term" value="F:magnesium ion binding"/>
    <property type="evidence" value="ECO:0007669"/>
    <property type="project" value="UniProtKB-UniRule"/>
</dbReference>
<dbReference type="GO" id="GO:0004826">
    <property type="term" value="F:phenylalanine-tRNA ligase activity"/>
    <property type="evidence" value="ECO:0007669"/>
    <property type="project" value="UniProtKB-UniRule"/>
</dbReference>
<dbReference type="GO" id="GO:0000049">
    <property type="term" value="F:tRNA binding"/>
    <property type="evidence" value="ECO:0007669"/>
    <property type="project" value="InterPro"/>
</dbReference>
<dbReference type="GO" id="GO:0006432">
    <property type="term" value="P:phenylalanyl-tRNA aminoacylation"/>
    <property type="evidence" value="ECO:0007669"/>
    <property type="project" value="UniProtKB-UniRule"/>
</dbReference>
<dbReference type="CDD" id="cd00496">
    <property type="entry name" value="PheRS_alpha_core"/>
    <property type="match status" value="1"/>
</dbReference>
<dbReference type="FunFam" id="3.30.930.10:FF:000089">
    <property type="entry name" value="Phenylalanine--tRNA ligase alpha subunit"/>
    <property type="match status" value="1"/>
</dbReference>
<dbReference type="Gene3D" id="3.30.930.10">
    <property type="entry name" value="Bira Bifunctional Protein, Domain 2"/>
    <property type="match status" value="1"/>
</dbReference>
<dbReference type="HAMAP" id="MF_00281">
    <property type="entry name" value="Phe_tRNA_synth_alpha1"/>
    <property type="match status" value="1"/>
</dbReference>
<dbReference type="InterPro" id="IPR006195">
    <property type="entry name" value="aa-tRNA-synth_II"/>
</dbReference>
<dbReference type="InterPro" id="IPR045864">
    <property type="entry name" value="aa-tRNA-synth_II/BPL/LPL"/>
</dbReference>
<dbReference type="InterPro" id="IPR004529">
    <property type="entry name" value="Phe-tRNA-synth_IIc_asu"/>
</dbReference>
<dbReference type="InterPro" id="IPR004188">
    <property type="entry name" value="Phe-tRNA_ligase_II_N"/>
</dbReference>
<dbReference type="InterPro" id="IPR022911">
    <property type="entry name" value="Phe_tRNA_ligase_alpha1_bac"/>
</dbReference>
<dbReference type="InterPro" id="IPR002319">
    <property type="entry name" value="Phenylalanyl-tRNA_Synthase"/>
</dbReference>
<dbReference type="InterPro" id="IPR010978">
    <property type="entry name" value="tRNA-bd_arm"/>
</dbReference>
<dbReference type="NCBIfam" id="TIGR00468">
    <property type="entry name" value="pheS"/>
    <property type="match status" value="1"/>
</dbReference>
<dbReference type="PANTHER" id="PTHR11538:SF41">
    <property type="entry name" value="PHENYLALANINE--TRNA LIGASE, MITOCHONDRIAL"/>
    <property type="match status" value="1"/>
</dbReference>
<dbReference type="PANTHER" id="PTHR11538">
    <property type="entry name" value="PHENYLALANYL-TRNA SYNTHETASE"/>
    <property type="match status" value="1"/>
</dbReference>
<dbReference type="Pfam" id="PF02912">
    <property type="entry name" value="Phe_tRNA-synt_N"/>
    <property type="match status" value="1"/>
</dbReference>
<dbReference type="Pfam" id="PF01409">
    <property type="entry name" value="tRNA-synt_2d"/>
    <property type="match status" value="1"/>
</dbReference>
<dbReference type="SUPFAM" id="SSF55681">
    <property type="entry name" value="Class II aaRS and biotin synthetases"/>
    <property type="match status" value="1"/>
</dbReference>
<dbReference type="SUPFAM" id="SSF46589">
    <property type="entry name" value="tRNA-binding arm"/>
    <property type="match status" value="1"/>
</dbReference>
<dbReference type="PROSITE" id="PS50862">
    <property type="entry name" value="AA_TRNA_LIGASE_II"/>
    <property type="match status" value="1"/>
</dbReference>
<keyword id="KW-0030">Aminoacyl-tRNA synthetase</keyword>
<keyword id="KW-0067">ATP-binding</keyword>
<keyword id="KW-0963">Cytoplasm</keyword>
<keyword id="KW-0436">Ligase</keyword>
<keyword id="KW-0460">Magnesium</keyword>
<keyword id="KW-0479">Metal-binding</keyword>
<keyword id="KW-0547">Nucleotide-binding</keyword>
<keyword id="KW-0648">Protein biosynthesis</keyword>
<evidence type="ECO:0000255" key="1">
    <source>
        <dbReference type="HAMAP-Rule" id="MF_00281"/>
    </source>
</evidence>
<organism>
    <name type="scientific">Mycoplasma capricolum subsp. capricolum (strain California kid / ATCC 27343 / NCTC 10154)</name>
    <dbReference type="NCBI Taxonomy" id="340047"/>
    <lineage>
        <taxon>Bacteria</taxon>
        <taxon>Bacillati</taxon>
        <taxon>Mycoplasmatota</taxon>
        <taxon>Mollicutes</taxon>
        <taxon>Mycoplasmataceae</taxon>
        <taxon>Mycoplasma</taxon>
    </lineage>
</organism>
<sequence length="350" mass="40433">MIEQLNEILNSFKTKLKSVKDLNDWEELKKEFIGKDSNLTTILKSIKTISNEQKQEIGKLANQIRTTIIDNLNNKQEELKNKELLIKLEKEKIDVSLKNSSLKFGSKHVLNIVIEEISDIFTEIGFEMVSGTEIESDLYNFQKLNLPLDHPARDMQDTFYLDNNLVLRTHCTNMTSRMLTKLASLKTDDNNLAVISYGNVYRRDDDDATHSHQFMQIDGFVVGNKISFANLKWILKYMCQRLFNKDINIRLRPSYFPFTEPSVEVDVSCFKCDSKGCFICKKTGWIEILGAGMINEHVLKLNGLDPTKCSGLAFGIGIERIAMLKFNISNIRNFYENNVKFLEQFKFYSE</sequence>
<reference key="1">
    <citation type="submission" date="2005-09" db="EMBL/GenBank/DDBJ databases">
        <authorList>
            <person name="Glass J.I."/>
            <person name="Lartigue C."/>
            <person name="Pfannkoch C."/>
            <person name="Baden-Tillson H."/>
            <person name="Smith H.O."/>
            <person name="Venter J.C."/>
            <person name="Roske K."/>
            <person name="Wise K.S."/>
            <person name="Calcutt M.J."/>
            <person name="Nelson W.C."/>
            <person name="Nierman W.C."/>
        </authorList>
    </citation>
    <scope>NUCLEOTIDE SEQUENCE [LARGE SCALE GENOMIC DNA]</scope>
    <source>
        <strain>California kid / ATCC 27343 / NCTC 10154</strain>
    </source>
</reference>
<proteinExistence type="inferred from homology"/>
<feature type="chain" id="PRO_0000231996" description="Phenylalanine--tRNA ligase alpha subunit">
    <location>
        <begin position="1"/>
        <end position="350"/>
    </location>
</feature>
<feature type="binding site" evidence="1">
    <location>
        <position position="260"/>
    </location>
    <ligand>
        <name>Mg(2+)</name>
        <dbReference type="ChEBI" id="CHEBI:18420"/>
        <note>shared with beta subunit</note>
    </ligand>
</feature>
<protein>
    <recommendedName>
        <fullName evidence="1">Phenylalanine--tRNA ligase alpha subunit</fullName>
        <ecNumber evidence="1">6.1.1.20</ecNumber>
    </recommendedName>
    <alternativeName>
        <fullName evidence="1">Phenylalanyl-tRNA synthetase alpha subunit</fullName>
        <shortName evidence="1">PheRS</shortName>
    </alternativeName>
</protein>
<comment type="catalytic activity">
    <reaction evidence="1">
        <text>tRNA(Phe) + L-phenylalanine + ATP = L-phenylalanyl-tRNA(Phe) + AMP + diphosphate + H(+)</text>
        <dbReference type="Rhea" id="RHEA:19413"/>
        <dbReference type="Rhea" id="RHEA-COMP:9668"/>
        <dbReference type="Rhea" id="RHEA-COMP:9699"/>
        <dbReference type="ChEBI" id="CHEBI:15378"/>
        <dbReference type="ChEBI" id="CHEBI:30616"/>
        <dbReference type="ChEBI" id="CHEBI:33019"/>
        <dbReference type="ChEBI" id="CHEBI:58095"/>
        <dbReference type="ChEBI" id="CHEBI:78442"/>
        <dbReference type="ChEBI" id="CHEBI:78531"/>
        <dbReference type="ChEBI" id="CHEBI:456215"/>
        <dbReference type="EC" id="6.1.1.20"/>
    </reaction>
</comment>
<comment type="cofactor">
    <cofactor evidence="1">
        <name>Mg(2+)</name>
        <dbReference type="ChEBI" id="CHEBI:18420"/>
    </cofactor>
    <text evidence="1">Binds 2 magnesium ions per tetramer.</text>
</comment>
<comment type="subunit">
    <text evidence="1">Tetramer of two alpha and two beta subunits.</text>
</comment>
<comment type="subcellular location">
    <subcellularLocation>
        <location evidence="1">Cytoplasm</location>
    </subcellularLocation>
</comment>
<comment type="similarity">
    <text evidence="1">Belongs to the class-II aminoacyl-tRNA synthetase family. Phe-tRNA synthetase alpha subunit type 1 subfamily.</text>
</comment>
<name>SYFA_MYCCT</name>
<gene>
    <name evidence="1" type="primary">pheS</name>
    <name type="ordered locus">MCAP_0383</name>
</gene>